<geneLocation type="plasmid">
    <name>IncFII NR79</name>
</geneLocation>
<dbReference type="EMBL" id="AF047479">
    <property type="protein sequence ID" value="AAC14740.1"/>
    <property type="molecule type" value="Genomic_DNA"/>
</dbReference>
<dbReference type="SMR" id="P26837"/>
<dbReference type="Gene3D" id="3.40.630.30">
    <property type="match status" value="1"/>
</dbReference>
<dbReference type="InterPro" id="IPR016181">
    <property type="entry name" value="Acyl_CoA_acyltransferase"/>
</dbReference>
<dbReference type="SUPFAM" id="SSF55729">
    <property type="entry name" value="Acyl-CoA N-acyltransferases (Nat)"/>
    <property type="match status" value="1"/>
</dbReference>
<organism>
    <name type="scientific">Escherichia coli</name>
    <dbReference type="NCBI Taxonomy" id="562"/>
    <lineage>
        <taxon>Bacteria</taxon>
        <taxon>Pseudomonadati</taxon>
        <taxon>Pseudomonadota</taxon>
        <taxon>Gammaproteobacteria</taxon>
        <taxon>Enterobacterales</taxon>
        <taxon>Enterobacteriaceae</taxon>
        <taxon>Escherichia</taxon>
    </lineage>
</organism>
<accession>P26837</accession>
<reference key="1">
    <citation type="journal article" date="1992" name="J. Bacteriol.">
        <title>The chloramphenicol acetyltransferase gene of Tn2424: a new breed of cat.</title>
        <authorList>
            <person name="Parent R."/>
            <person name="Roy P.H."/>
        </authorList>
    </citation>
    <scope>NUCLEOTIDE SEQUENCE [GENOMIC DNA]</scope>
    <source>
        <transposon>Tn2424</transposon>
    </source>
</reference>
<name>YPS1_ECOLX</name>
<feature type="chain" id="PRO_0000068538" description="Uncharacterized protein in sul1 3'region">
    <location>
        <begin position="1"/>
        <end position="78" status="greater than"/>
    </location>
</feature>
<feature type="non-terminal residue">
    <location>
        <position position="78"/>
    </location>
</feature>
<keyword id="KW-0614">Plasmid</keyword>
<keyword id="KW-0814">Transposable element</keyword>
<sequence length="78" mass="8386">MDSEEPPNVRVACSGDIDEVVRLMHDAAAWMSAKGTPAWDVARIDRTFAETFVLRSELLVASCSDGIVGCCTLSAEDP</sequence>
<proteinExistence type="predicted"/>
<protein>
    <recommendedName>
        <fullName>Uncharacterized protein in sul1 3'region</fullName>
    </recommendedName>
    <alternativeName>
        <fullName>ORF5</fullName>
    </alternativeName>
</protein>